<accession>Q3B8D4</accession>
<proteinExistence type="evidence at transcript level"/>
<keyword id="KW-0175">Coiled coil</keyword>
<keyword id="KW-0238">DNA-binding</keyword>
<keyword id="KW-1185">Reference proteome</keyword>
<keyword id="KW-0678">Repressor</keyword>
<keyword id="KW-0804">Transcription</keyword>
<keyword id="KW-0805">Transcription regulation</keyword>
<feature type="chain" id="PRO_0000274281" description="BEN domain-containing protein 5">
    <location>
        <begin position="1"/>
        <end position="393"/>
    </location>
</feature>
<feature type="domain" description="BEN" evidence="3">
    <location>
        <begin position="274"/>
        <end position="380"/>
    </location>
</feature>
<feature type="coiled-coil region" evidence="2">
    <location>
        <begin position="169"/>
        <end position="212"/>
    </location>
</feature>
<gene>
    <name type="primary">bend5</name>
</gene>
<dbReference type="EMBL" id="BC106563">
    <property type="protein sequence ID" value="AAI06564.1"/>
    <property type="molecule type" value="mRNA"/>
</dbReference>
<dbReference type="RefSeq" id="NP_001089788.1">
    <property type="nucleotide sequence ID" value="NM_001096319.1"/>
</dbReference>
<dbReference type="SMR" id="Q3B8D4"/>
<dbReference type="DNASU" id="734853"/>
<dbReference type="GeneID" id="734853"/>
<dbReference type="KEGG" id="xla:734853"/>
<dbReference type="AGR" id="Xenbase:XB-GENE-940889"/>
<dbReference type="CTD" id="734853"/>
<dbReference type="Xenbase" id="XB-GENE-940889">
    <property type="gene designation" value="bend5.S"/>
</dbReference>
<dbReference type="OrthoDB" id="9931198at2759"/>
<dbReference type="Proteomes" id="UP000186698">
    <property type="component" value="Chromosome 4S"/>
</dbReference>
<dbReference type="Bgee" id="734853">
    <property type="expression patterns" value="Expressed in testis and 18 other cell types or tissues"/>
</dbReference>
<dbReference type="GO" id="GO:0003677">
    <property type="term" value="F:DNA binding"/>
    <property type="evidence" value="ECO:0007669"/>
    <property type="project" value="UniProtKB-KW"/>
</dbReference>
<dbReference type="GO" id="GO:0045892">
    <property type="term" value="P:negative regulation of DNA-templated transcription"/>
    <property type="evidence" value="ECO:0000318"/>
    <property type="project" value="GO_Central"/>
</dbReference>
<dbReference type="FunFam" id="1.10.10.2590:FF:000003">
    <property type="entry name" value="BEN domain-containing protein 5 isoform X1"/>
    <property type="match status" value="1"/>
</dbReference>
<dbReference type="Gene3D" id="1.10.10.2590">
    <property type="entry name" value="BEN domain"/>
    <property type="match status" value="1"/>
</dbReference>
<dbReference type="InterPro" id="IPR018379">
    <property type="entry name" value="BEN_domain"/>
</dbReference>
<dbReference type="InterPro" id="IPR040391">
    <property type="entry name" value="BEND5"/>
</dbReference>
<dbReference type="PANTHER" id="PTHR14628">
    <property type="entry name" value="BEN DOMAIN-CONTAINING PROTEIN 5"/>
    <property type="match status" value="1"/>
</dbReference>
<dbReference type="PANTHER" id="PTHR14628:SF1">
    <property type="entry name" value="BEN DOMAIN-CONTAINING PROTEIN 5"/>
    <property type="match status" value="1"/>
</dbReference>
<dbReference type="Pfam" id="PF10523">
    <property type="entry name" value="BEN"/>
    <property type="match status" value="1"/>
</dbReference>
<dbReference type="SMART" id="SM01025">
    <property type="entry name" value="BEN"/>
    <property type="match status" value="1"/>
</dbReference>
<dbReference type="PROSITE" id="PS51457">
    <property type="entry name" value="BEN"/>
    <property type="match status" value="1"/>
</dbReference>
<sequence>MFAFVRFLEDNVCYALPATRVREFHPHSTEDFDSRRVYAVYRSLEEEAGFPGAPQQAQILALAENKTDLENRVMQKKIKIPKISLNYSEQPWEYKDYEDEEDSEFRHFKRADGRKQVESPHKSIEAVVARLEKQSFIGPSHNTRCDEVFSEPFHSVGHMDRLEAAVVPRVLYEELLRSYQQQQQEMKHIQHELERTRKQLVQQAKKLKDYGSLVTEVKELRVLNRRLQDVLLLRLGSGPTIELQIDKSDYCDPEPEPEPEPEIQKISNEEVHLGSGVWVNEEKWHQLQATQGDSKYTKNLAVMIWGTDVLKNRSVTGVATKKKKDAVPKPPLSPHKLSVVRECMYDRIARETMDENEIAQRLSKVNKYICEKIMDINKSCKNEERREAKYNVQ</sequence>
<name>BEND5_XENLA</name>
<reference key="1">
    <citation type="submission" date="2005-10" db="EMBL/GenBank/DDBJ databases">
        <authorList>
            <consortium name="NIH - Xenopus Gene Collection (XGC) project"/>
        </authorList>
    </citation>
    <scope>NUCLEOTIDE SEQUENCE [LARGE SCALE MRNA]</scope>
    <source>
        <tissue>Testis</tissue>
    </source>
</reference>
<protein>
    <recommendedName>
        <fullName>BEN domain-containing protein 5</fullName>
    </recommendedName>
</protein>
<evidence type="ECO:0000250" key="1">
    <source>
        <dbReference type="UniProtKB" id="Q7L4P6"/>
    </source>
</evidence>
<evidence type="ECO:0000255" key="2"/>
<evidence type="ECO:0000255" key="3">
    <source>
        <dbReference type="PROSITE-ProRule" id="PRU00784"/>
    </source>
</evidence>
<organism>
    <name type="scientific">Xenopus laevis</name>
    <name type="common">African clawed frog</name>
    <dbReference type="NCBI Taxonomy" id="8355"/>
    <lineage>
        <taxon>Eukaryota</taxon>
        <taxon>Metazoa</taxon>
        <taxon>Chordata</taxon>
        <taxon>Craniata</taxon>
        <taxon>Vertebrata</taxon>
        <taxon>Euteleostomi</taxon>
        <taxon>Amphibia</taxon>
        <taxon>Batrachia</taxon>
        <taxon>Anura</taxon>
        <taxon>Pipoidea</taxon>
        <taxon>Pipidae</taxon>
        <taxon>Xenopodinae</taxon>
        <taxon>Xenopus</taxon>
        <taxon>Xenopus</taxon>
    </lineage>
</organism>
<comment type="function">
    <text evidence="1">May act as a transcriptional repressor.</text>
</comment>
<comment type="domain">
    <text evidence="1">The BEN domain mediates DNA-binding.</text>
</comment>